<sequence length="255" mass="28191">MTLRTENLTVSYGTDKVLNDVSLSLPTGKITALIGPNGCGKSTLLNCFSRLLMPQSGTVFLGDNPINMLSSRQLARRLSLLPQHHLTPEGITVQELVSYGRNPWLSLWGRLSAEDNARVNVAMNQTRINHLAVRRLTELSGGQRQRAFLAMVLAQNTPVVLLDEPTTYLDINHQVDLMRLMGELRTQGKTVVAVLHDLNQASRYCDQLVVMANGHVMAQGTPEEVMTPGLLRTVFSVEAEIHPEPVSGRPMCLMR</sequence>
<feature type="chain" id="PRO_0000092324" description="Fe(3+) dicitrate transport ATP-binding protein FecE">
    <location>
        <begin position="1"/>
        <end position="255"/>
    </location>
</feature>
<feature type="domain" description="ABC transporter" evidence="1">
    <location>
        <begin position="3"/>
        <end position="238"/>
    </location>
</feature>
<feature type="binding site" evidence="1">
    <location>
        <begin position="35"/>
        <end position="42"/>
    </location>
    <ligand>
        <name>ATP</name>
        <dbReference type="ChEBI" id="CHEBI:30616"/>
    </ligand>
</feature>
<reference key="1">
    <citation type="journal article" date="1989" name="J. Bacteriol.">
        <title>Nucleotide sequences of the fecBCDE genes and locations of the proteins suggest a periplasmic-binding-protein-dependent transport mechanism for iron(III) dicitrate in Escherichia coli.</title>
        <authorList>
            <person name="Staudenmaier H."/>
            <person name="van Hove B."/>
            <person name="Yaraghi Z."/>
            <person name="Braun V."/>
        </authorList>
    </citation>
    <scope>NUCLEOTIDE SEQUENCE [GENOMIC DNA]</scope>
    <scope>FUNCTION</scope>
    <scope>SUBUNIT</scope>
    <scope>SUBCELLULAR LOCATION</scope>
    <source>
        <strain>K12</strain>
    </source>
</reference>
<reference key="2">
    <citation type="journal article" date="1995" name="Nucleic Acids Res.">
        <title>Analysis of the Escherichia coli genome VI: DNA sequence of the region from 92.8 through 100 minutes.</title>
        <authorList>
            <person name="Burland V.D."/>
            <person name="Plunkett G. III"/>
            <person name="Sofia H.J."/>
            <person name="Daniels D.L."/>
            <person name="Blattner F.R."/>
        </authorList>
    </citation>
    <scope>NUCLEOTIDE SEQUENCE [LARGE SCALE GENOMIC DNA]</scope>
    <source>
        <strain>K12 / MG1655 / ATCC 47076</strain>
    </source>
</reference>
<reference key="3">
    <citation type="journal article" date="1997" name="Science">
        <title>The complete genome sequence of Escherichia coli K-12.</title>
        <authorList>
            <person name="Blattner F.R."/>
            <person name="Plunkett G. III"/>
            <person name="Bloch C.A."/>
            <person name="Perna N.T."/>
            <person name="Burland V."/>
            <person name="Riley M."/>
            <person name="Collado-Vides J."/>
            <person name="Glasner J.D."/>
            <person name="Rode C.K."/>
            <person name="Mayhew G.F."/>
            <person name="Gregor J."/>
            <person name="Davis N.W."/>
            <person name="Kirkpatrick H.A."/>
            <person name="Goeden M.A."/>
            <person name="Rose D.J."/>
            <person name="Mau B."/>
            <person name="Shao Y."/>
        </authorList>
    </citation>
    <scope>NUCLEOTIDE SEQUENCE [LARGE SCALE GENOMIC DNA]</scope>
    <source>
        <strain>K12 / MG1655 / ATCC 47076</strain>
    </source>
</reference>
<reference key="4">
    <citation type="journal article" date="2006" name="Mol. Syst. Biol.">
        <title>Highly accurate genome sequences of Escherichia coli K-12 strains MG1655 and W3110.</title>
        <authorList>
            <person name="Hayashi K."/>
            <person name="Morooka N."/>
            <person name="Yamamoto Y."/>
            <person name="Fujita K."/>
            <person name="Isono K."/>
            <person name="Choi S."/>
            <person name="Ohtsubo E."/>
            <person name="Baba T."/>
            <person name="Wanner B.L."/>
            <person name="Mori H."/>
            <person name="Horiuchi T."/>
        </authorList>
    </citation>
    <scope>NUCLEOTIDE SEQUENCE [LARGE SCALE GENOMIC DNA]</scope>
    <source>
        <strain>K12 / W3110 / ATCC 27325 / DSM 5911</strain>
    </source>
</reference>
<reference key="5">
    <citation type="journal article" date="1992" name="FEMS Microbiol. Lett.">
        <title>8-Azido-ATP labelling of the FecE protein of the Escherichia coli iron citrate transport system.</title>
        <authorList>
            <person name="Schultz-Hauser G."/>
            <person name="Van Hove B."/>
            <person name="Braun V."/>
        </authorList>
    </citation>
    <scope>FUNCTION</scope>
    <scope>ATP-BINDING</scope>
</reference>
<reference key="6">
    <citation type="journal article" date="2009" name="Mol. Cell">
        <title>Hydroxyurea induces hydroxyl radical-mediated cell death in Escherichia coli.</title>
        <authorList>
            <person name="Davies B.W."/>
            <person name="Kohanski M.A."/>
            <person name="Simmons L.A."/>
            <person name="Winkler J.A."/>
            <person name="Collins J.J."/>
            <person name="Walker G.C."/>
        </authorList>
    </citation>
    <scope>INDUCTION BY HYDROXYUREA</scope>
    <source>
        <strain>K12 / MC4100 / ATCC 35695 / DSM 6574</strain>
    </source>
</reference>
<accession>P15031</accession>
<accession>Q2M628</accession>
<organism>
    <name type="scientific">Escherichia coli (strain K12)</name>
    <dbReference type="NCBI Taxonomy" id="83333"/>
    <lineage>
        <taxon>Bacteria</taxon>
        <taxon>Pseudomonadati</taxon>
        <taxon>Pseudomonadota</taxon>
        <taxon>Gammaproteobacteria</taxon>
        <taxon>Enterobacterales</taxon>
        <taxon>Enterobacteriaceae</taxon>
        <taxon>Escherichia</taxon>
    </lineage>
</organism>
<gene>
    <name evidence="5" type="primary">fecE</name>
    <name type="ordered locus">b4287</name>
    <name type="ordered locus">JW4247</name>
</gene>
<proteinExistence type="evidence at protein level"/>
<keyword id="KW-0067">ATP-binding</keyword>
<keyword id="KW-0997">Cell inner membrane</keyword>
<keyword id="KW-1003">Cell membrane</keyword>
<keyword id="KW-0406">Ion transport</keyword>
<keyword id="KW-0408">Iron</keyword>
<keyword id="KW-0410">Iron transport</keyword>
<keyword id="KW-0472">Membrane</keyword>
<keyword id="KW-0547">Nucleotide-binding</keyword>
<keyword id="KW-1185">Reference proteome</keyword>
<keyword id="KW-1278">Translocase</keyword>
<keyword id="KW-0813">Transport</keyword>
<dbReference type="EC" id="7.2.2.18" evidence="7 8"/>
<dbReference type="EMBL" id="M26397">
    <property type="protein sequence ID" value="AAA23765.1"/>
    <property type="molecule type" value="Genomic_DNA"/>
</dbReference>
<dbReference type="EMBL" id="U14003">
    <property type="protein sequence ID" value="AAA97183.1"/>
    <property type="molecule type" value="Genomic_DNA"/>
</dbReference>
<dbReference type="EMBL" id="U00096">
    <property type="protein sequence ID" value="AAC77243.1"/>
    <property type="molecule type" value="Genomic_DNA"/>
</dbReference>
<dbReference type="EMBL" id="AP009048">
    <property type="protein sequence ID" value="BAE78278.1"/>
    <property type="molecule type" value="Genomic_DNA"/>
</dbReference>
<dbReference type="PIR" id="JS0115">
    <property type="entry name" value="QRECM3"/>
</dbReference>
<dbReference type="RefSeq" id="NP_418707.1">
    <property type="nucleotide sequence ID" value="NC_000913.3"/>
</dbReference>
<dbReference type="RefSeq" id="WP_000175457.1">
    <property type="nucleotide sequence ID" value="NZ_STEB01000013.1"/>
</dbReference>
<dbReference type="SMR" id="P15031"/>
<dbReference type="BioGRID" id="4262739">
    <property type="interactions" value="250"/>
</dbReference>
<dbReference type="ComplexPortal" id="CPX-4403">
    <property type="entry name" value="Ferric-citrate ABC transporter complex"/>
</dbReference>
<dbReference type="FunCoup" id="P15031">
    <property type="interactions" value="432"/>
</dbReference>
<dbReference type="IntAct" id="P15031">
    <property type="interactions" value="2"/>
</dbReference>
<dbReference type="STRING" id="511145.b4287"/>
<dbReference type="TCDB" id="3.A.1.14.1">
    <property type="family name" value="the atp-binding cassette (abc) superfamily"/>
</dbReference>
<dbReference type="PaxDb" id="511145-b4287"/>
<dbReference type="EnsemblBacteria" id="AAC77243">
    <property type="protein sequence ID" value="AAC77243"/>
    <property type="gene ID" value="b4287"/>
</dbReference>
<dbReference type="GeneID" id="948819"/>
<dbReference type="KEGG" id="ecj:JW4247"/>
<dbReference type="KEGG" id="eco:b4287"/>
<dbReference type="KEGG" id="ecoc:C3026_23120"/>
<dbReference type="PATRIC" id="fig|1411691.4.peg.2413"/>
<dbReference type="EchoBASE" id="EB0286"/>
<dbReference type="eggNOG" id="COG1120">
    <property type="taxonomic scope" value="Bacteria"/>
</dbReference>
<dbReference type="HOGENOM" id="CLU_000604_1_11_6"/>
<dbReference type="InParanoid" id="P15031"/>
<dbReference type="OMA" id="ASRYCDH"/>
<dbReference type="OrthoDB" id="5292475at2"/>
<dbReference type="PhylomeDB" id="P15031"/>
<dbReference type="BioCyc" id="EcoCyc:FECE-MONOMER"/>
<dbReference type="BioCyc" id="MetaCyc:FECE-MONOMER"/>
<dbReference type="PHI-base" id="PHI:11754"/>
<dbReference type="PHI-base" id="PHI:8010"/>
<dbReference type="PRO" id="PR:P15031"/>
<dbReference type="Proteomes" id="UP000000625">
    <property type="component" value="Chromosome"/>
</dbReference>
<dbReference type="GO" id="GO:0055052">
    <property type="term" value="C:ATP-binding cassette (ABC) transporter complex, substrate-binding subunit-containing"/>
    <property type="evidence" value="ECO:0000303"/>
    <property type="project" value="ComplexPortal"/>
</dbReference>
<dbReference type="GO" id="GO:0016020">
    <property type="term" value="C:membrane"/>
    <property type="evidence" value="ECO:0000303"/>
    <property type="project" value="ComplexPortal"/>
</dbReference>
<dbReference type="GO" id="GO:0005886">
    <property type="term" value="C:plasma membrane"/>
    <property type="evidence" value="ECO:0000314"/>
    <property type="project" value="EcoCyc"/>
</dbReference>
<dbReference type="GO" id="GO:0005524">
    <property type="term" value="F:ATP binding"/>
    <property type="evidence" value="ECO:0000314"/>
    <property type="project" value="EcoCyc"/>
</dbReference>
<dbReference type="GO" id="GO:0016887">
    <property type="term" value="F:ATP hydrolysis activity"/>
    <property type="evidence" value="ECO:0007669"/>
    <property type="project" value="InterPro"/>
</dbReference>
<dbReference type="GO" id="GO:0006879">
    <property type="term" value="P:intracellular iron ion homeostasis"/>
    <property type="evidence" value="ECO:0000303"/>
    <property type="project" value="ComplexPortal"/>
</dbReference>
<dbReference type="GO" id="GO:0033212">
    <property type="term" value="P:iron import into cell"/>
    <property type="evidence" value="ECO:0000303"/>
    <property type="project" value="ComplexPortal"/>
</dbReference>
<dbReference type="GO" id="GO:0055085">
    <property type="term" value="P:transmembrane transport"/>
    <property type="evidence" value="ECO:0007669"/>
    <property type="project" value="GOC"/>
</dbReference>
<dbReference type="CDD" id="cd03214">
    <property type="entry name" value="ABC_Iron-Siderophores_B12_Hemin"/>
    <property type="match status" value="1"/>
</dbReference>
<dbReference type="FunFam" id="3.40.50.300:FF:000134">
    <property type="entry name" value="Iron-enterobactin ABC transporter ATP-binding protein"/>
    <property type="match status" value="1"/>
</dbReference>
<dbReference type="Gene3D" id="3.40.50.300">
    <property type="entry name" value="P-loop containing nucleotide triphosphate hydrolases"/>
    <property type="match status" value="1"/>
</dbReference>
<dbReference type="InterPro" id="IPR003593">
    <property type="entry name" value="AAA+_ATPase"/>
</dbReference>
<dbReference type="InterPro" id="IPR003439">
    <property type="entry name" value="ABC_transporter-like_ATP-bd"/>
</dbReference>
<dbReference type="InterPro" id="IPR017871">
    <property type="entry name" value="ABC_transporter-like_CS"/>
</dbReference>
<dbReference type="InterPro" id="IPR027417">
    <property type="entry name" value="P-loop_NTPase"/>
</dbReference>
<dbReference type="InterPro" id="IPR051535">
    <property type="entry name" value="Siderophore_ABC-ATPase"/>
</dbReference>
<dbReference type="NCBIfam" id="NF008409">
    <property type="entry name" value="PRK11231.1"/>
    <property type="match status" value="1"/>
</dbReference>
<dbReference type="PANTHER" id="PTHR42771:SF12">
    <property type="entry name" value="FE(3+) DICITRATE TRANSPORT ATP-BINDING PROTEIN FECE-RELATED"/>
    <property type="match status" value="1"/>
</dbReference>
<dbReference type="PANTHER" id="PTHR42771">
    <property type="entry name" value="IRON(3+)-HYDROXAMATE IMPORT ATP-BINDING PROTEIN FHUC"/>
    <property type="match status" value="1"/>
</dbReference>
<dbReference type="Pfam" id="PF00005">
    <property type="entry name" value="ABC_tran"/>
    <property type="match status" value="1"/>
</dbReference>
<dbReference type="SMART" id="SM00382">
    <property type="entry name" value="AAA"/>
    <property type="match status" value="1"/>
</dbReference>
<dbReference type="SUPFAM" id="SSF52540">
    <property type="entry name" value="P-loop containing nucleoside triphosphate hydrolases"/>
    <property type="match status" value="1"/>
</dbReference>
<dbReference type="PROSITE" id="PS00211">
    <property type="entry name" value="ABC_TRANSPORTER_1"/>
    <property type="match status" value="1"/>
</dbReference>
<dbReference type="PROSITE" id="PS50893">
    <property type="entry name" value="ABC_TRANSPORTER_2"/>
    <property type="match status" value="1"/>
</dbReference>
<comment type="function">
    <text evidence="2 4">Part of the ABC transporter complex FecBCDE involved in citrate-dependent Fe(3+) uptake (PubMed:2651410). Binds ATP (PubMed:1526456). Probably responsible for energy coupling to the transport system (PubMed:1526456).</text>
</comment>
<comment type="catalytic activity">
    <reaction evidence="7 8">
        <text>iron(III) dicitrate(out) + ATP + H2O = iron(III) dicitrate(in) + ADP + phosphate + H(+)</text>
        <dbReference type="Rhea" id="RHEA:58912"/>
        <dbReference type="ChEBI" id="CHEBI:4991"/>
        <dbReference type="ChEBI" id="CHEBI:15377"/>
        <dbReference type="ChEBI" id="CHEBI:15378"/>
        <dbReference type="ChEBI" id="CHEBI:30616"/>
        <dbReference type="ChEBI" id="CHEBI:43474"/>
        <dbReference type="ChEBI" id="CHEBI:456216"/>
        <dbReference type="EC" id="7.2.2.18"/>
    </reaction>
</comment>
<comment type="subunit">
    <text evidence="4">The complex is composed of two ATP-binding proteins (FecE), two transmembrane proteins (FecC and FecD) and a solute-binding protein (FecB).</text>
</comment>
<comment type="subcellular location">
    <subcellularLocation>
        <location evidence="4">Cell inner membrane</location>
        <topology evidence="8">Peripheral membrane protein</topology>
    </subcellularLocation>
</comment>
<comment type="induction">
    <text evidence="3">Induced 1.6-fold by hydroxyurea.</text>
</comment>
<comment type="similarity">
    <text evidence="6">Belongs to the ABC transporter superfamily.</text>
</comment>
<name>FECE_ECOLI</name>
<evidence type="ECO:0000255" key="1">
    <source>
        <dbReference type="PROSITE-ProRule" id="PRU00434"/>
    </source>
</evidence>
<evidence type="ECO:0000269" key="2">
    <source>
    </source>
</evidence>
<evidence type="ECO:0000269" key="3">
    <source>
    </source>
</evidence>
<evidence type="ECO:0000269" key="4">
    <source>
    </source>
</evidence>
<evidence type="ECO:0000303" key="5">
    <source>
    </source>
</evidence>
<evidence type="ECO:0000305" key="6"/>
<evidence type="ECO:0000305" key="7">
    <source>
    </source>
</evidence>
<evidence type="ECO:0000305" key="8">
    <source>
    </source>
</evidence>
<protein>
    <recommendedName>
        <fullName evidence="6">Fe(3+) dicitrate transport ATP-binding protein FecE</fullName>
        <ecNumber evidence="7 8">7.2.2.18</ecNumber>
    </recommendedName>
    <alternativeName>
        <fullName>Iron(III) dicitrate transport ATP-binding protein FecE</fullName>
    </alternativeName>
</protein>